<dbReference type="EC" id="4.1.2.13" evidence="2"/>
<dbReference type="EMBL" id="CP000029">
    <property type="protein sequence ID" value="AAW52952.1"/>
    <property type="molecule type" value="Genomic_DNA"/>
</dbReference>
<dbReference type="RefSeq" id="WP_010959297.1">
    <property type="nucleotide sequence ID" value="NC_002976.3"/>
</dbReference>
<dbReference type="SMR" id="Q5HL21"/>
<dbReference type="STRING" id="176279.SERP2166"/>
<dbReference type="KEGG" id="ser:SERP2166"/>
<dbReference type="eggNOG" id="COG3588">
    <property type="taxonomic scope" value="Bacteria"/>
</dbReference>
<dbReference type="HOGENOM" id="CLU_081560_0_0_9"/>
<dbReference type="UniPathway" id="UPA00109">
    <property type="reaction ID" value="UER00183"/>
</dbReference>
<dbReference type="Proteomes" id="UP000000531">
    <property type="component" value="Chromosome"/>
</dbReference>
<dbReference type="GO" id="GO:0004332">
    <property type="term" value="F:fructose-bisphosphate aldolase activity"/>
    <property type="evidence" value="ECO:0007669"/>
    <property type="project" value="UniProtKB-UniRule"/>
</dbReference>
<dbReference type="GO" id="GO:0006096">
    <property type="term" value="P:glycolytic process"/>
    <property type="evidence" value="ECO:0007669"/>
    <property type="project" value="UniProtKB-UniRule"/>
</dbReference>
<dbReference type="Gene3D" id="3.20.20.70">
    <property type="entry name" value="Aldolase class I"/>
    <property type="match status" value="1"/>
</dbReference>
<dbReference type="HAMAP" id="MF_00729">
    <property type="entry name" value="FBP_aldolase_1"/>
    <property type="match status" value="1"/>
</dbReference>
<dbReference type="InterPro" id="IPR013785">
    <property type="entry name" value="Aldolase_TIM"/>
</dbReference>
<dbReference type="InterPro" id="IPR000741">
    <property type="entry name" value="FBA_I"/>
</dbReference>
<dbReference type="InterPro" id="IPR023014">
    <property type="entry name" value="FBA_I_Gram+-type"/>
</dbReference>
<dbReference type="NCBIfam" id="NF003784">
    <property type="entry name" value="PRK05377.1"/>
    <property type="match status" value="1"/>
</dbReference>
<dbReference type="PANTHER" id="PTHR11627">
    <property type="entry name" value="FRUCTOSE-BISPHOSPHATE ALDOLASE"/>
    <property type="match status" value="1"/>
</dbReference>
<dbReference type="Pfam" id="PF00274">
    <property type="entry name" value="Glycolytic"/>
    <property type="match status" value="1"/>
</dbReference>
<dbReference type="SUPFAM" id="SSF51569">
    <property type="entry name" value="Aldolase"/>
    <property type="match status" value="1"/>
</dbReference>
<evidence type="ECO:0000250" key="1"/>
<evidence type="ECO:0000255" key="2">
    <source>
        <dbReference type="HAMAP-Rule" id="MF_00729"/>
    </source>
</evidence>
<organism>
    <name type="scientific">Staphylococcus epidermidis (strain ATCC 35984 / DSM 28319 / BCRC 17069 / CCUG 31568 / BM 3577 / RP62A)</name>
    <dbReference type="NCBI Taxonomy" id="176279"/>
    <lineage>
        <taxon>Bacteria</taxon>
        <taxon>Bacillati</taxon>
        <taxon>Bacillota</taxon>
        <taxon>Bacilli</taxon>
        <taxon>Bacillales</taxon>
        <taxon>Staphylococcaceae</taxon>
        <taxon>Staphylococcus</taxon>
    </lineage>
</organism>
<feature type="initiator methionine" description="Removed" evidence="1">
    <location>
        <position position="1"/>
    </location>
</feature>
<feature type="chain" id="PRO_0000216911" description="Fructose-bisphosphate aldolase class 1">
    <location>
        <begin position="2"/>
        <end position="296"/>
    </location>
</feature>
<feature type="active site" description="Proton acceptor" evidence="2">
    <location>
        <position position="175"/>
    </location>
</feature>
<feature type="active site" description="Schiff-base intermediate with dihydroxyacetone-P" evidence="2">
    <location>
        <position position="212"/>
    </location>
</feature>
<comment type="catalytic activity">
    <reaction evidence="2">
        <text>beta-D-fructose 1,6-bisphosphate = D-glyceraldehyde 3-phosphate + dihydroxyacetone phosphate</text>
        <dbReference type="Rhea" id="RHEA:14729"/>
        <dbReference type="ChEBI" id="CHEBI:32966"/>
        <dbReference type="ChEBI" id="CHEBI:57642"/>
        <dbReference type="ChEBI" id="CHEBI:59776"/>
        <dbReference type="EC" id="4.1.2.13"/>
    </reaction>
</comment>
<comment type="pathway">
    <text evidence="2">Carbohydrate degradation; glycolysis; D-glyceraldehyde 3-phosphate and glycerone phosphate from D-glucose: step 4/4.</text>
</comment>
<comment type="similarity">
    <text evidence="2">Belongs to the class I fructose-bisphosphate aldolase family.</text>
</comment>
<accession>Q5HL21</accession>
<proteinExistence type="inferred from homology"/>
<protein>
    <recommendedName>
        <fullName evidence="2">Fructose-bisphosphate aldolase class 1</fullName>
        <ecNumber evidence="2">4.1.2.13</ecNumber>
    </recommendedName>
    <alternativeName>
        <fullName>Fructose-bisphosphate aldolase class I</fullName>
        <shortName evidence="2">FBP aldolase</shortName>
    </alternativeName>
</protein>
<sequence length="296" mass="32993">MNKEQLEKMTHGKGFIAALDQSGGSTPKALKEYGVNEDQYSNEDEMFQLVHDMRTRVVTSPSFSPDKILGAILFEQTMDREVEGKYTGDYLADKGVVPFLKVDKGLAEEKNGVQLMKPIDDLDATLNRANERHIFGTKMRSNILELNEQGIKDVVEQQFEFAKKIIAKGLVPIIEPEVNINAKDKSEIEKVLKAEIKKGLDSLNDDQLVMLKLTIPTEANLYKDLADHPNVVRVVVLSGGYSRDEANKLLKDNDELIASFSRALASDLRASQSQEEFDKALGDAVDSIYDASVNKN</sequence>
<name>ALF1_STAEQ</name>
<keyword id="KW-0324">Glycolysis</keyword>
<keyword id="KW-0456">Lyase</keyword>
<keyword id="KW-1185">Reference proteome</keyword>
<keyword id="KW-0704">Schiff base</keyword>
<gene>
    <name evidence="2" type="primary">fda</name>
    <name type="ordered locus">SERP2166</name>
</gene>
<reference key="1">
    <citation type="journal article" date="2005" name="J. Bacteriol.">
        <title>Insights on evolution of virulence and resistance from the complete genome analysis of an early methicillin-resistant Staphylococcus aureus strain and a biofilm-producing methicillin-resistant Staphylococcus epidermidis strain.</title>
        <authorList>
            <person name="Gill S.R."/>
            <person name="Fouts D.E."/>
            <person name="Archer G.L."/>
            <person name="Mongodin E.F."/>
            <person name="DeBoy R.T."/>
            <person name="Ravel J."/>
            <person name="Paulsen I.T."/>
            <person name="Kolonay J.F."/>
            <person name="Brinkac L.M."/>
            <person name="Beanan M.J."/>
            <person name="Dodson R.J."/>
            <person name="Daugherty S.C."/>
            <person name="Madupu R."/>
            <person name="Angiuoli S.V."/>
            <person name="Durkin A.S."/>
            <person name="Haft D.H."/>
            <person name="Vamathevan J.J."/>
            <person name="Khouri H."/>
            <person name="Utterback T.R."/>
            <person name="Lee C."/>
            <person name="Dimitrov G."/>
            <person name="Jiang L."/>
            <person name="Qin H."/>
            <person name="Weidman J."/>
            <person name="Tran K."/>
            <person name="Kang K.H."/>
            <person name="Hance I.R."/>
            <person name="Nelson K.E."/>
            <person name="Fraser C.M."/>
        </authorList>
    </citation>
    <scope>NUCLEOTIDE SEQUENCE [LARGE SCALE GENOMIC DNA]</scope>
    <source>
        <strain>ATCC 35984 / DSM 28319 / BCRC 17069 / CCUG 31568 / BM 3577 / RP62A</strain>
    </source>
</reference>